<proteinExistence type="inferred from homology"/>
<protein>
    <recommendedName>
        <fullName evidence="1">Adenylate kinase</fullName>
        <shortName evidence="1">AK</shortName>
        <ecNumber evidence="1">2.7.4.3</ecNumber>
    </recommendedName>
    <alternativeName>
        <fullName evidence="1">ATP-AMP transphosphorylase</fullName>
    </alternativeName>
    <alternativeName>
        <fullName evidence="1">ATP:AMP phosphotransferase</fullName>
    </alternativeName>
    <alternativeName>
        <fullName evidence="1">Adenylate monophosphate kinase</fullName>
    </alternativeName>
</protein>
<sequence>MLNIVIFGAPGSGKGTQSERIVEKYGINHISTGDVLRAEIKNGTELGKTAKGYIDQGQLIPDELMVDILASVFDSFKDSKGVIFDGFPRTIPQAEALKVMLKERGQDISVMLDLDVPEEELMTRLIKRGKESGRADDNEETIKKRLVVYNTQTSPLKEYYKGEGKYQHINGLGTMEGIFEDICKAVDTL</sequence>
<accession>Q5LGH0</accession>
<dbReference type="EC" id="2.7.4.3" evidence="1"/>
<dbReference type="EMBL" id="CR626927">
    <property type="protein sequence ID" value="CAH06769.1"/>
    <property type="molecule type" value="Genomic_DNA"/>
</dbReference>
<dbReference type="RefSeq" id="WP_005785533.1">
    <property type="nucleotide sequence ID" value="NZ_UFTH01000001.1"/>
</dbReference>
<dbReference type="SMR" id="Q5LGH0"/>
<dbReference type="PaxDb" id="272559-BF9343_0988"/>
<dbReference type="KEGG" id="bfs:BF9343_0988"/>
<dbReference type="eggNOG" id="COG0563">
    <property type="taxonomic scope" value="Bacteria"/>
</dbReference>
<dbReference type="HOGENOM" id="CLU_032354_4_1_10"/>
<dbReference type="UniPathway" id="UPA00588">
    <property type="reaction ID" value="UER00649"/>
</dbReference>
<dbReference type="Proteomes" id="UP000006731">
    <property type="component" value="Chromosome"/>
</dbReference>
<dbReference type="GO" id="GO:0005737">
    <property type="term" value="C:cytoplasm"/>
    <property type="evidence" value="ECO:0007669"/>
    <property type="project" value="UniProtKB-SubCell"/>
</dbReference>
<dbReference type="GO" id="GO:0004017">
    <property type="term" value="F:adenylate kinase activity"/>
    <property type="evidence" value="ECO:0007669"/>
    <property type="project" value="UniProtKB-UniRule"/>
</dbReference>
<dbReference type="GO" id="GO:0005524">
    <property type="term" value="F:ATP binding"/>
    <property type="evidence" value="ECO:0007669"/>
    <property type="project" value="UniProtKB-UniRule"/>
</dbReference>
<dbReference type="GO" id="GO:0044209">
    <property type="term" value="P:AMP salvage"/>
    <property type="evidence" value="ECO:0007669"/>
    <property type="project" value="UniProtKB-UniRule"/>
</dbReference>
<dbReference type="CDD" id="cd01428">
    <property type="entry name" value="ADK"/>
    <property type="match status" value="1"/>
</dbReference>
<dbReference type="Gene3D" id="3.40.50.300">
    <property type="entry name" value="P-loop containing nucleotide triphosphate hydrolases"/>
    <property type="match status" value="1"/>
</dbReference>
<dbReference type="HAMAP" id="MF_00235">
    <property type="entry name" value="Adenylate_kinase_Adk"/>
    <property type="match status" value="1"/>
</dbReference>
<dbReference type="InterPro" id="IPR000850">
    <property type="entry name" value="Adenylat/UMP-CMP_kin"/>
</dbReference>
<dbReference type="InterPro" id="IPR033690">
    <property type="entry name" value="Adenylat_kinase_CS"/>
</dbReference>
<dbReference type="InterPro" id="IPR027417">
    <property type="entry name" value="P-loop_NTPase"/>
</dbReference>
<dbReference type="NCBIfam" id="NF001381">
    <property type="entry name" value="PRK00279.1-3"/>
    <property type="match status" value="1"/>
</dbReference>
<dbReference type="NCBIfam" id="NF011100">
    <property type="entry name" value="PRK14527.1"/>
    <property type="match status" value="1"/>
</dbReference>
<dbReference type="NCBIfam" id="NF011101">
    <property type="entry name" value="PRK14528.1"/>
    <property type="match status" value="1"/>
</dbReference>
<dbReference type="NCBIfam" id="NF011104">
    <property type="entry name" value="PRK14531.1"/>
    <property type="match status" value="1"/>
</dbReference>
<dbReference type="NCBIfam" id="NF011105">
    <property type="entry name" value="PRK14532.1"/>
    <property type="match status" value="1"/>
</dbReference>
<dbReference type="PANTHER" id="PTHR23359">
    <property type="entry name" value="NUCLEOTIDE KINASE"/>
    <property type="match status" value="1"/>
</dbReference>
<dbReference type="Pfam" id="PF00406">
    <property type="entry name" value="ADK"/>
    <property type="match status" value="1"/>
</dbReference>
<dbReference type="PRINTS" id="PR00094">
    <property type="entry name" value="ADENYLTKNASE"/>
</dbReference>
<dbReference type="SUPFAM" id="SSF52540">
    <property type="entry name" value="P-loop containing nucleoside triphosphate hydrolases"/>
    <property type="match status" value="1"/>
</dbReference>
<dbReference type="PROSITE" id="PS00113">
    <property type="entry name" value="ADENYLATE_KINASE"/>
    <property type="match status" value="1"/>
</dbReference>
<gene>
    <name evidence="1" type="primary">adk</name>
    <name type="ordered locus">BF1032</name>
</gene>
<keyword id="KW-0067">ATP-binding</keyword>
<keyword id="KW-0963">Cytoplasm</keyword>
<keyword id="KW-0418">Kinase</keyword>
<keyword id="KW-0545">Nucleotide biosynthesis</keyword>
<keyword id="KW-0547">Nucleotide-binding</keyword>
<keyword id="KW-0808">Transferase</keyword>
<comment type="function">
    <text evidence="1">Catalyzes the reversible transfer of the terminal phosphate group between ATP and AMP. Plays an important role in cellular energy homeostasis and in adenine nucleotide metabolism.</text>
</comment>
<comment type="catalytic activity">
    <reaction evidence="1">
        <text>AMP + ATP = 2 ADP</text>
        <dbReference type="Rhea" id="RHEA:12973"/>
        <dbReference type="ChEBI" id="CHEBI:30616"/>
        <dbReference type="ChEBI" id="CHEBI:456215"/>
        <dbReference type="ChEBI" id="CHEBI:456216"/>
        <dbReference type="EC" id="2.7.4.3"/>
    </reaction>
</comment>
<comment type="pathway">
    <text evidence="1">Purine metabolism; AMP biosynthesis via salvage pathway; AMP from ADP: step 1/1.</text>
</comment>
<comment type="subunit">
    <text evidence="1">Monomer.</text>
</comment>
<comment type="subcellular location">
    <subcellularLocation>
        <location evidence="1">Cytoplasm</location>
    </subcellularLocation>
</comment>
<comment type="domain">
    <text evidence="1">Consists of three domains, a large central CORE domain and two small peripheral domains, NMPbind and LID, which undergo movements during catalysis. The LID domain closes over the site of phosphoryl transfer upon ATP binding. Assembling and dissambling the active center during each catalytic cycle provides an effective means to prevent ATP hydrolysis.</text>
</comment>
<comment type="similarity">
    <text evidence="1">Belongs to the adenylate kinase family.</text>
</comment>
<name>KAD_BACFN</name>
<evidence type="ECO:0000255" key="1">
    <source>
        <dbReference type="HAMAP-Rule" id="MF_00235"/>
    </source>
</evidence>
<reference key="1">
    <citation type="journal article" date="2005" name="Science">
        <title>Extensive DNA inversions in the B. fragilis genome control variable gene expression.</title>
        <authorList>
            <person name="Cerdeno-Tarraga A.-M."/>
            <person name="Patrick S."/>
            <person name="Crossman L.C."/>
            <person name="Blakely G."/>
            <person name="Abratt V."/>
            <person name="Lennard N."/>
            <person name="Poxton I."/>
            <person name="Duerden B."/>
            <person name="Harris B."/>
            <person name="Quail M.A."/>
            <person name="Barron A."/>
            <person name="Clark L."/>
            <person name="Corton C."/>
            <person name="Doggett J."/>
            <person name="Holden M.T.G."/>
            <person name="Larke N."/>
            <person name="Line A."/>
            <person name="Lord A."/>
            <person name="Norbertczak H."/>
            <person name="Ormond D."/>
            <person name="Price C."/>
            <person name="Rabbinowitsch E."/>
            <person name="Woodward J."/>
            <person name="Barrell B.G."/>
            <person name="Parkhill J."/>
        </authorList>
    </citation>
    <scope>NUCLEOTIDE SEQUENCE [LARGE SCALE GENOMIC DNA]</scope>
    <source>
        <strain>ATCC 25285 / DSM 2151 / CCUG 4856 / JCM 11019 / LMG 10263 / NCTC 9343 / Onslow / VPI 2553 / EN-2</strain>
    </source>
</reference>
<organism>
    <name type="scientific">Bacteroides fragilis (strain ATCC 25285 / DSM 2151 / CCUG 4856 / JCM 11019 / LMG 10263 / NCTC 9343 / Onslow / VPI 2553 / EN-2)</name>
    <dbReference type="NCBI Taxonomy" id="272559"/>
    <lineage>
        <taxon>Bacteria</taxon>
        <taxon>Pseudomonadati</taxon>
        <taxon>Bacteroidota</taxon>
        <taxon>Bacteroidia</taxon>
        <taxon>Bacteroidales</taxon>
        <taxon>Bacteroidaceae</taxon>
        <taxon>Bacteroides</taxon>
    </lineage>
</organism>
<feature type="chain" id="PRO_1000058784" description="Adenylate kinase">
    <location>
        <begin position="1"/>
        <end position="189"/>
    </location>
</feature>
<feature type="region of interest" description="NMP" evidence="1">
    <location>
        <begin position="31"/>
        <end position="60"/>
    </location>
</feature>
<feature type="region of interest" description="LID" evidence="1">
    <location>
        <begin position="127"/>
        <end position="137"/>
    </location>
</feature>
<feature type="binding site" evidence="1">
    <location>
        <begin position="11"/>
        <end position="16"/>
    </location>
    <ligand>
        <name>ATP</name>
        <dbReference type="ChEBI" id="CHEBI:30616"/>
    </ligand>
</feature>
<feature type="binding site" evidence="1">
    <location>
        <position position="32"/>
    </location>
    <ligand>
        <name>AMP</name>
        <dbReference type="ChEBI" id="CHEBI:456215"/>
    </ligand>
</feature>
<feature type="binding site" evidence="1">
    <location>
        <position position="37"/>
    </location>
    <ligand>
        <name>AMP</name>
        <dbReference type="ChEBI" id="CHEBI:456215"/>
    </ligand>
</feature>
<feature type="binding site" evidence="1">
    <location>
        <begin position="58"/>
        <end position="60"/>
    </location>
    <ligand>
        <name>AMP</name>
        <dbReference type="ChEBI" id="CHEBI:456215"/>
    </ligand>
</feature>
<feature type="binding site" evidence="1">
    <location>
        <begin position="86"/>
        <end position="89"/>
    </location>
    <ligand>
        <name>AMP</name>
        <dbReference type="ChEBI" id="CHEBI:456215"/>
    </ligand>
</feature>
<feature type="binding site" evidence="1">
    <location>
        <position position="93"/>
    </location>
    <ligand>
        <name>AMP</name>
        <dbReference type="ChEBI" id="CHEBI:456215"/>
    </ligand>
</feature>
<feature type="binding site" evidence="1">
    <location>
        <position position="128"/>
    </location>
    <ligand>
        <name>ATP</name>
        <dbReference type="ChEBI" id="CHEBI:30616"/>
    </ligand>
</feature>
<feature type="binding site" evidence="1">
    <location>
        <position position="134"/>
    </location>
    <ligand>
        <name>AMP</name>
        <dbReference type="ChEBI" id="CHEBI:456215"/>
    </ligand>
</feature>
<feature type="binding site" evidence="1">
    <location>
        <position position="145"/>
    </location>
    <ligand>
        <name>AMP</name>
        <dbReference type="ChEBI" id="CHEBI:456215"/>
    </ligand>
</feature>
<feature type="binding site" evidence="1">
    <location>
        <position position="173"/>
    </location>
    <ligand>
        <name>ATP</name>
        <dbReference type="ChEBI" id="CHEBI:30616"/>
    </ligand>
</feature>